<reference key="1">
    <citation type="submission" date="2010-01" db="EMBL/GenBank/DDBJ databases">
        <title>The complete genome of Conexibacter woesei DSM 14684.</title>
        <authorList>
            <consortium name="US DOE Joint Genome Institute (JGI-PGF)"/>
            <person name="Lucas S."/>
            <person name="Copeland A."/>
            <person name="Lapidus A."/>
            <person name="Glavina del Rio T."/>
            <person name="Dalin E."/>
            <person name="Tice H."/>
            <person name="Bruce D."/>
            <person name="Goodwin L."/>
            <person name="Pitluck S."/>
            <person name="Kyrpides N."/>
            <person name="Mavromatis K."/>
            <person name="Ivanova N."/>
            <person name="Mikhailova N."/>
            <person name="Chertkov O."/>
            <person name="Brettin T."/>
            <person name="Detter J.C."/>
            <person name="Han C."/>
            <person name="Larimer F."/>
            <person name="Land M."/>
            <person name="Hauser L."/>
            <person name="Markowitz V."/>
            <person name="Cheng J.-F."/>
            <person name="Hugenholtz P."/>
            <person name="Woyke T."/>
            <person name="Wu D."/>
            <person name="Pukall R."/>
            <person name="Steenblock K."/>
            <person name="Schneider S."/>
            <person name="Klenk H.-P."/>
            <person name="Eisen J.A."/>
        </authorList>
    </citation>
    <scope>NUCLEOTIDE SEQUENCE [LARGE SCALE GENOMIC DNA]</scope>
    <source>
        <strain>DSM 14684 / CCUG 47730 / CIP 108061 / JCM 11494 / NBRC 100937 / ID131577</strain>
    </source>
</reference>
<name>FTSH3_CONWI</name>
<dbReference type="EC" id="3.4.24.-" evidence="1"/>
<dbReference type="EMBL" id="CP001854">
    <property type="protein sequence ID" value="ADB53840.1"/>
    <property type="molecule type" value="Genomic_DNA"/>
</dbReference>
<dbReference type="RefSeq" id="WP_012936891.1">
    <property type="nucleotide sequence ID" value="NC_013739.1"/>
</dbReference>
<dbReference type="SMR" id="D3EZK2"/>
<dbReference type="STRING" id="469383.Cwoe_5435"/>
<dbReference type="KEGG" id="cwo:Cwoe_5435"/>
<dbReference type="eggNOG" id="COG0465">
    <property type="taxonomic scope" value="Bacteria"/>
</dbReference>
<dbReference type="HOGENOM" id="CLU_000688_16_2_11"/>
<dbReference type="OrthoDB" id="9809379at2"/>
<dbReference type="Proteomes" id="UP000008229">
    <property type="component" value="Chromosome"/>
</dbReference>
<dbReference type="GO" id="GO:0005886">
    <property type="term" value="C:plasma membrane"/>
    <property type="evidence" value="ECO:0007669"/>
    <property type="project" value="UniProtKB-SubCell"/>
</dbReference>
<dbReference type="GO" id="GO:0005524">
    <property type="term" value="F:ATP binding"/>
    <property type="evidence" value="ECO:0007669"/>
    <property type="project" value="UniProtKB-UniRule"/>
</dbReference>
<dbReference type="GO" id="GO:0016887">
    <property type="term" value="F:ATP hydrolysis activity"/>
    <property type="evidence" value="ECO:0007669"/>
    <property type="project" value="UniProtKB-UniRule"/>
</dbReference>
<dbReference type="GO" id="GO:0004176">
    <property type="term" value="F:ATP-dependent peptidase activity"/>
    <property type="evidence" value="ECO:0007669"/>
    <property type="project" value="InterPro"/>
</dbReference>
<dbReference type="GO" id="GO:0004222">
    <property type="term" value="F:metalloendopeptidase activity"/>
    <property type="evidence" value="ECO:0007669"/>
    <property type="project" value="InterPro"/>
</dbReference>
<dbReference type="GO" id="GO:0008270">
    <property type="term" value="F:zinc ion binding"/>
    <property type="evidence" value="ECO:0007669"/>
    <property type="project" value="UniProtKB-UniRule"/>
</dbReference>
<dbReference type="GO" id="GO:0030163">
    <property type="term" value="P:protein catabolic process"/>
    <property type="evidence" value="ECO:0007669"/>
    <property type="project" value="UniProtKB-UniRule"/>
</dbReference>
<dbReference type="GO" id="GO:0006508">
    <property type="term" value="P:proteolysis"/>
    <property type="evidence" value="ECO:0007669"/>
    <property type="project" value="UniProtKB-KW"/>
</dbReference>
<dbReference type="CDD" id="cd19501">
    <property type="entry name" value="RecA-like_FtsH"/>
    <property type="match status" value="1"/>
</dbReference>
<dbReference type="FunFam" id="1.10.8.60:FF:000001">
    <property type="entry name" value="ATP-dependent zinc metalloprotease FtsH"/>
    <property type="match status" value="1"/>
</dbReference>
<dbReference type="FunFam" id="1.20.58.760:FF:000001">
    <property type="entry name" value="ATP-dependent zinc metalloprotease FtsH"/>
    <property type="match status" value="1"/>
</dbReference>
<dbReference type="FunFam" id="3.40.50.300:FF:000001">
    <property type="entry name" value="ATP-dependent zinc metalloprotease FtsH"/>
    <property type="match status" value="1"/>
</dbReference>
<dbReference type="Gene3D" id="1.10.8.60">
    <property type="match status" value="1"/>
</dbReference>
<dbReference type="Gene3D" id="3.30.720.210">
    <property type="match status" value="1"/>
</dbReference>
<dbReference type="Gene3D" id="3.40.50.300">
    <property type="entry name" value="P-loop containing nucleotide triphosphate hydrolases"/>
    <property type="match status" value="1"/>
</dbReference>
<dbReference type="Gene3D" id="1.20.58.760">
    <property type="entry name" value="Peptidase M41"/>
    <property type="match status" value="1"/>
</dbReference>
<dbReference type="HAMAP" id="MF_01458">
    <property type="entry name" value="FtsH"/>
    <property type="match status" value="1"/>
</dbReference>
<dbReference type="InterPro" id="IPR003593">
    <property type="entry name" value="AAA+_ATPase"/>
</dbReference>
<dbReference type="InterPro" id="IPR041569">
    <property type="entry name" value="AAA_lid_3"/>
</dbReference>
<dbReference type="InterPro" id="IPR003959">
    <property type="entry name" value="ATPase_AAA_core"/>
</dbReference>
<dbReference type="InterPro" id="IPR003960">
    <property type="entry name" value="ATPase_AAA_CS"/>
</dbReference>
<dbReference type="InterPro" id="IPR005936">
    <property type="entry name" value="FtsH"/>
</dbReference>
<dbReference type="InterPro" id="IPR027417">
    <property type="entry name" value="P-loop_NTPase"/>
</dbReference>
<dbReference type="InterPro" id="IPR011546">
    <property type="entry name" value="Pept_M41_FtsH_extracell"/>
</dbReference>
<dbReference type="InterPro" id="IPR000642">
    <property type="entry name" value="Peptidase_M41"/>
</dbReference>
<dbReference type="InterPro" id="IPR037219">
    <property type="entry name" value="Peptidase_M41-like"/>
</dbReference>
<dbReference type="NCBIfam" id="TIGR01241">
    <property type="entry name" value="FtsH_fam"/>
    <property type="match status" value="1"/>
</dbReference>
<dbReference type="PANTHER" id="PTHR23076:SF97">
    <property type="entry name" value="ATP-DEPENDENT ZINC METALLOPROTEASE YME1L1"/>
    <property type="match status" value="1"/>
</dbReference>
<dbReference type="PANTHER" id="PTHR23076">
    <property type="entry name" value="METALLOPROTEASE M41 FTSH"/>
    <property type="match status" value="1"/>
</dbReference>
<dbReference type="Pfam" id="PF00004">
    <property type="entry name" value="AAA"/>
    <property type="match status" value="1"/>
</dbReference>
<dbReference type="Pfam" id="PF17862">
    <property type="entry name" value="AAA_lid_3"/>
    <property type="match status" value="1"/>
</dbReference>
<dbReference type="Pfam" id="PF06480">
    <property type="entry name" value="FtsH_ext"/>
    <property type="match status" value="1"/>
</dbReference>
<dbReference type="Pfam" id="PF01434">
    <property type="entry name" value="Peptidase_M41"/>
    <property type="match status" value="1"/>
</dbReference>
<dbReference type="SMART" id="SM00382">
    <property type="entry name" value="AAA"/>
    <property type="match status" value="1"/>
</dbReference>
<dbReference type="SUPFAM" id="SSF140990">
    <property type="entry name" value="FtsH protease domain-like"/>
    <property type="match status" value="1"/>
</dbReference>
<dbReference type="SUPFAM" id="SSF52540">
    <property type="entry name" value="P-loop containing nucleoside triphosphate hydrolases"/>
    <property type="match status" value="1"/>
</dbReference>
<dbReference type="PROSITE" id="PS00674">
    <property type="entry name" value="AAA"/>
    <property type="match status" value="1"/>
</dbReference>
<sequence length="749" mass="79931">MTGDPPERRSNGDRLPAERPPSNEGQTPPRKPGRNEPGSPPDWRVTPAPDGRGTPRRGRNGGGMRPFRFPGGRWGILVFILVLLGLNWWISSNALAPSERVRVPYSPNFIQQVRDGNVKEISSTGASIQGDFRADVTYPPKDDKDSVTAKKFSTEVPAFADTDELSKLLQDNDVTVNASPADNGPSLLVSILLGFGPVILIIALFVFLSRRMAGAAGGGMMSFGRSRARRSEGGEAQVTFRDVAGIDEAEAELNEIVDFLKNPQKYQRLGGKIPKGVLLSGQPGTGKTLLARAVAGEAGVPFFSMSASEFVEMIVGVGASRVRDLFRQAKEAAPAIIFIDELDAIGRARGGGRGSFGGNDEREQTLNQILTEMDGFEPTTAVIVIAATNRPEILDAALLRPGRFDRRVTVAAPDRNGRLMILKVHTRSVPLADDVDLESIASSTPGMVGADLANLVNEAALLAARRGHVKVTNSDVADALEKVVLGAERKVMMSDDDRRRTAYHESGHAIVGMLTAGADPVRKVSIIPRGQALGVTFSSPDADKYNYDERYLVGKIKVALGGRVAEEIVFGDLTTGAESDIQQLTGIARQMVGRWGMSRAIGPIAVLPSEGNGPLLPGVAETSESTQRLVDEEVRRIVDSAHAEVTRLLREHRANLDSLVAGLLDQETLDEADAYEAAGLEHMRPERVEPPAPRPSRRDGGRSVAAGPVPHGLEAPERPAQIAAPGADEPEPPTNGSGELGGSVRAGDA</sequence>
<feature type="chain" id="PRO_0000400339" description="ATP-dependent zinc metalloprotease FtsH 3">
    <location>
        <begin position="1"/>
        <end position="749"/>
    </location>
</feature>
<feature type="topological domain" description="Cytoplasmic" evidence="1">
    <location>
        <begin position="1"/>
        <end position="75"/>
    </location>
</feature>
<feature type="transmembrane region" description="Helical" evidence="1">
    <location>
        <begin position="76"/>
        <end position="96"/>
    </location>
</feature>
<feature type="topological domain" description="Extracellular" evidence="1">
    <location>
        <begin position="97"/>
        <end position="186"/>
    </location>
</feature>
<feature type="transmembrane region" description="Helical" evidence="1">
    <location>
        <begin position="187"/>
        <end position="207"/>
    </location>
</feature>
<feature type="topological domain" description="Cytoplasmic" evidence="1">
    <location>
        <begin position="208"/>
        <end position="749"/>
    </location>
</feature>
<feature type="region of interest" description="Disordered" evidence="2">
    <location>
        <begin position="1"/>
        <end position="67"/>
    </location>
</feature>
<feature type="region of interest" description="Disordered" evidence="2">
    <location>
        <begin position="679"/>
        <end position="749"/>
    </location>
</feature>
<feature type="compositionally biased region" description="Basic and acidic residues" evidence="2">
    <location>
        <begin position="1"/>
        <end position="17"/>
    </location>
</feature>
<feature type="compositionally biased region" description="Basic and acidic residues" evidence="2">
    <location>
        <begin position="679"/>
        <end position="689"/>
    </location>
</feature>
<feature type="active site" evidence="1">
    <location>
        <position position="505"/>
    </location>
</feature>
<feature type="binding site" evidence="1">
    <location>
        <begin position="281"/>
        <end position="288"/>
    </location>
    <ligand>
        <name>ATP</name>
        <dbReference type="ChEBI" id="CHEBI:30616"/>
    </ligand>
</feature>
<feature type="binding site" evidence="1">
    <location>
        <position position="504"/>
    </location>
    <ligand>
        <name>Zn(2+)</name>
        <dbReference type="ChEBI" id="CHEBI:29105"/>
        <note>catalytic</note>
    </ligand>
</feature>
<feature type="binding site" evidence="1">
    <location>
        <position position="508"/>
    </location>
    <ligand>
        <name>Zn(2+)</name>
        <dbReference type="ChEBI" id="CHEBI:29105"/>
        <note>catalytic</note>
    </ligand>
</feature>
<feature type="binding site" evidence="1">
    <location>
        <position position="580"/>
    </location>
    <ligand>
        <name>Zn(2+)</name>
        <dbReference type="ChEBI" id="CHEBI:29105"/>
        <note>catalytic</note>
    </ligand>
</feature>
<gene>
    <name evidence="1" type="primary">ftsH3</name>
    <name type="ordered locus">Cwoe_5435</name>
</gene>
<proteinExistence type="inferred from homology"/>
<comment type="function">
    <text evidence="1">Acts as a processive, ATP-dependent zinc metallopeptidase for both cytoplasmic and membrane proteins. Plays a role in the quality control of integral membrane proteins.</text>
</comment>
<comment type="cofactor">
    <cofactor evidence="1">
        <name>Zn(2+)</name>
        <dbReference type="ChEBI" id="CHEBI:29105"/>
    </cofactor>
    <text evidence="1">Binds 1 zinc ion per subunit.</text>
</comment>
<comment type="subunit">
    <text evidence="1">Homohexamer.</text>
</comment>
<comment type="subcellular location">
    <subcellularLocation>
        <location evidence="1">Cell membrane</location>
        <topology evidence="1">Multi-pass membrane protein</topology>
        <orientation evidence="1">Cytoplasmic side</orientation>
    </subcellularLocation>
</comment>
<comment type="similarity">
    <text evidence="1">In the central section; belongs to the AAA ATPase family.</text>
</comment>
<comment type="similarity">
    <text evidence="1">In the C-terminal section; belongs to the peptidase M41 family.</text>
</comment>
<evidence type="ECO:0000255" key="1">
    <source>
        <dbReference type="HAMAP-Rule" id="MF_01458"/>
    </source>
</evidence>
<evidence type="ECO:0000256" key="2">
    <source>
        <dbReference type="SAM" id="MobiDB-lite"/>
    </source>
</evidence>
<protein>
    <recommendedName>
        <fullName evidence="1">ATP-dependent zinc metalloprotease FtsH 3</fullName>
        <ecNumber evidence="1">3.4.24.-</ecNumber>
    </recommendedName>
</protein>
<keyword id="KW-0067">ATP-binding</keyword>
<keyword id="KW-1003">Cell membrane</keyword>
<keyword id="KW-0378">Hydrolase</keyword>
<keyword id="KW-0472">Membrane</keyword>
<keyword id="KW-0479">Metal-binding</keyword>
<keyword id="KW-0482">Metalloprotease</keyword>
<keyword id="KW-0547">Nucleotide-binding</keyword>
<keyword id="KW-0645">Protease</keyword>
<keyword id="KW-1185">Reference proteome</keyword>
<keyword id="KW-0812">Transmembrane</keyword>
<keyword id="KW-1133">Transmembrane helix</keyword>
<keyword id="KW-0862">Zinc</keyword>
<accession>D3EZK2</accession>
<organism>
    <name type="scientific">Conexibacter woesei (strain DSM 14684 / CCUG 47730 / CIP 108061 / JCM 11494 / NBRC 100937 / ID131577)</name>
    <dbReference type="NCBI Taxonomy" id="469383"/>
    <lineage>
        <taxon>Bacteria</taxon>
        <taxon>Bacillati</taxon>
        <taxon>Actinomycetota</taxon>
        <taxon>Thermoleophilia</taxon>
        <taxon>Solirubrobacterales</taxon>
        <taxon>Conexibacteraceae</taxon>
        <taxon>Conexibacter</taxon>
    </lineage>
</organism>